<gene>
    <name type="primary">NSL1</name>
    <name type="ordered locus">YPL233W</name>
</gene>
<dbReference type="EMBL" id="Z73589">
    <property type="protein sequence ID" value="CAA97950.1"/>
    <property type="molecule type" value="Genomic_DNA"/>
</dbReference>
<dbReference type="EMBL" id="X94561">
    <property type="protein sequence ID" value="CAA64254.1"/>
    <property type="molecule type" value="Genomic_DNA"/>
</dbReference>
<dbReference type="EMBL" id="AY693228">
    <property type="protein sequence ID" value="AAT93247.1"/>
    <property type="molecule type" value="Genomic_DNA"/>
</dbReference>
<dbReference type="EMBL" id="BK006949">
    <property type="protein sequence ID" value="DAA11203.1"/>
    <property type="molecule type" value="Genomic_DNA"/>
</dbReference>
<dbReference type="PIR" id="S61701">
    <property type="entry name" value="S61701"/>
</dbReference>
<dbReference type="RefSeq" id="NP_015091.1">
    <property type="nucleotide sequence ID" value="NM_001184047.1"/>
</dbReference>
<dbReference type="SMR" id="Q12143"/>
<dbReference type="BioGRID" id="35929">
    <property type="interactions" value="376"/>
</dbReference>
<dbReference type="ComplexPortal" id="CPX-1186">
    <property type="entry name" value="Kinetochore MIS12 complex"/>
</dbReference>
<dbReference type="DIP" id="DIP-5393N"/>
<dbReference type="FunCoup" id="Q12143">
    <property type="interactions" value="140"/>
</dbReference>
<dbReference type="IntAct" id="Q12143">
    <property type="interactions" value="24"/>
</dbReference>
<dbReference type="MINT" id="Q12143"/>
<dbReference type="STRING" id="4932.YPL233W"/>
<dbReference type="iPTMnet" id="Q12143"/>
<dbReference type="PaxDb" id="4932-YPL233W"/>
<dbReference type="PeptideAtlas" id="Q12143"/>
<dbReference type="EnsemblFungi" id="YPL233W_mRNA">
    <property type="protein sequence ID" value="YPL233W"/>
    <property type="gene ID" value="YPL233W"/>
</dbReference>
<dbReference type="GeneID" id="855843"/>
<dbReference type="KEGG" id="sce:YPL233W"/>
<dbReference type="AGR" id="SGD:S000006154"/>
<dbReference type="SGD" id="S000006154">
    <property type="gene designation" value="NSL1"/>
</dbReference>
<dbReference type="VEuPathDB" id="FungiDB:YPL233W"/>
<dbReference type="eggNOG" id="ENOG502SA1D">
    <property type="taxonomic scope" value="Eukaryota"/>
</dbReference>
<dbReference type="HOGENOM" id="CLU_100671_0_0_1"/>
<dbReference type="InParanoid" id="Q12143"/>
<dbReference type="OMA" id="QEWEDQT"/>
<dbReference type="OrthoDB" id="2135762at2759"/>
<dbReference type="BioCyc" id="YEAST:G3O-34120-MONOMER"/>
<dbReference type="BioGRID-ORCS" id="855843">
    <property type="hits" value="1 hit in 10 CRISPR screens"/>
</dbReference>
<dbReference type="CD-CODE" id="876000F7">
    <property type="entry name" value="Centrosome"/>
</dbReference>
<dbReference type="PRO" id="PR:Q12143"/>
<dbReference type="Proteomes" id="UP000002311">
    <property type="component" value="Chromosome XVI"/>
</dbReference>
<dbReference type="RNAct" id="Q12143">
    <property type="molecule type" value="protein"/>
</dbReference>
<dbReference type="GO" id="GO:0000776">
    <property type="term" value="C:kinetochore"/>
    <property type="evidence" value="ECO:0000314"/>
    <property type="project" value="SGD"/>
</dbReference>
<dbReference type="GO" id="GO:0000444">
    <property type="term" value="C:MIS12/MIND type complex"/>
    <property type="evidence" value="ECO:0000314"/>
    <property type="project" value="SGD"/>
</dbReference>
<dbReference type="GO" id="GO:0005634">
    <property type="term" value="C:nucleus"/>
    <property type="evidence" value="ECO:0000314"/>
    <property type="project" value="ComplexPortal"/>
</dbReference>
<dbReference type="GO" id="GO:0000940">
    <property type="term" value="C:outer kinetochore"/>
    <property type="evidence" value="ECO:0000314"/>
    <property type="project" value="UniProtKB"/>
</dbReference>
<dbReference type="GO" id="GO:0000922">
    <property type="term" value="C:spindle pole"/>
    <property type="evidence" value="ECO:0000314"/>
    <property type="project" value="SGD"/>
</dbReference>
<dbReference type="GO" id="GO:0008608">
    <property type="term" value="P:attachment of spindle microtubules to kinetochore"/>
    <property type="evidence" value="ECO:0000303"/>
    <property type="project" value="ComplexPortal"/>
</dbReference>
<dbReference type="GO" id="GO:0051301">
    <property type="term" value="P:cell division"/>
    <property type="evidence" value="ECO:0007669"/>
    <property type="project" value="UniProtKB-KW"/>
</dbReference>
<dbReference type="GO" id="GO:0007059">
    <property type="term" value="P:chromosome segregation"/>
    <property type="evidence" value="ECO:0000314"/>
    <property type="project" value="SGD"/>
</dbReference>
<dbReference type="GO" id="GO:0000070">
    <property type="term" value="P:mitotic sister chromatid segregation"/>
    <property type="evidence" value="ECO:0007669"/>
    <property type="project" value="InterPro"/>
</dbReference>
<dbReference type="InterPro" id="IPR013950">
    <property type="entry name" value="Mis14/Nsl1"/>
</dbReference>
<dbReference type="PANTHER" id="PTHR31749">
    <property type="entry name" value="KINETOCHORE-ASSOCIATED PROTEIN NSL1 HOMOLOG"/>
    <property type="match status" value="1"/>
</dbReference>
<dbReference type="PANTHER" id="PTHR31749:SF3">
    <property type="entry name" value="KINETOCHORE-ASSOCIATED PROTEIN NSL1 HOMOLOG"/>
    <property type="match status" value="1"/>
</dbReference>
<dbReference type="Pfam" id="PF08641">
    <property type="entry name" value="Mis14"/>
    <property type="match status" value="1"/>
</dbReference>
<name>NSL1_YEAST</name>
<proteinExistence type="evidence at protein level"/>
<organism>
    <name type="scientific">Saccharomyces cerevisiae (strain ATCC 204508 / S288c)</name>
    <name type="common">Baker's yeast</name>
    <dbReference type="NCBI Taxonomy" id="559292"/>
    <lineage>
        <taxon>Eukaryota</taxon>
        <taxon>Fungi</taxon>
        <taxon>Dikarya</taxon>
        <taxon>Ascomycota</taxon>
        <taxon>Saccharomycotina</taxon>
        <taxon>Saccharomycetes</taxon>
        <taxon>Saccharomycetales</taxon>
        <taxon>Saccharomycetaceae</taxon>
        <taxon>Saccharomyces</taxon>
    </lineage>
</organism>
<sequence>MSQGQSKKLDVTVEQLRSIYHQFHDILEEKTDLHLPKKEYDDDAVRREVQIQLQEFLLSAMTMASKSLEVVNADTVGKTVKQLIMESQEKYMEPFDLDLNEQVRKMYQEWEDETVKVAQLRQTGPAKINEVYNNSKDEYLAQLDGRIGVLQARMMQQQSADHDDSTDDADDHINWEHIKQDYVASLNELYQTQQDLPKVRYNVEKVKRLMDFLEED</sequence>
<protein>
    <recommendedName>
        <fullName>Kinetochore-associated protein NSL1</fullName>
    </recommendedName>
</protein>
<comment type="function">
    <text evidence="1 4 5">Acts as an essential component of the kinetochore MIND complex, which is required for the spindle checkpoint and kinetochore integrity. MIND plays a role in establishing a bipolar spindle-kinetochore interaction by joining kinetochore subunits contacting DNA to those contacting microtubules. NSL1 facilitates the attachment of two of the DASH complex components, DAD2 and SPC19, to the kinetochore in a microtubule-dependent manner.</text>
</comment>
<comment type="subunit">
    <text evidence="3 4 5 6">Component of the MIND kinetochore complex, which is composed of at least MTW1, NNF1, NSL1 and DSN1. Interacts with DSN1.</text>
</comment>
<comment type="interaction">
    <interactant intactId="EBI-33666">
        <id>Q12143</id>
    </interactant>
    <interactant intactId="EBI-25398">
        <id>P40568</id>
        <label>DSN1</label>
    </interactant>
    <organismsDiffer>false</organismsDiffer>
    <experiments>14</experiments>
</comment>
<comment type="subcellular location">
    <subcellularLocation>
        <location evidence="1 5">Nucleus</location>
    </subcellularLocation>
    <subcellularLocation>
        <location evidence="1 5">Chromosome</location>
        <location evidence="1 5">Centromere</location>
        <location evidence="1 5">Kinetochore</location>
    </subcellularLocation>
    <text>Associated with the kinetochore (PubMed:12455957, PubMed:14657030).</text>
</comment>
<comment type="miscellaneous">
    <text evidence="2">Present with 3710 molecules/cell in log phase SD medium.</text>
</comment>
<accession>Q12143</accession>
<accession>D6W3D7</accession>
<accession>Q6B152</accession>
<feature type="initiator methionine" description="Removed" evidence="8">
    <location>
        <position position="1"/>
    </location>
</feature>
<feature type="chain" id="PRO_0000057965" description="Kinetochore-associated protein NSL1">
    <location>
        <begin position="2"/>
        <end position="216"/>
    </location>
</feature>
<feature type="modified residue" description="N-acetylserine" evidence="8">
    <location>
        <position position="2"/>
    </location>
</feature>
<feature type="sequence conflict" description="In Ref. 3; AAT93247." evidence="7" ref="3">
    <original>F</original>
    <variation>L</variation>
    <location>
        <position position="212"/>
    </location>
</feature>
<keyword id="KW-0007">Acetylation</keyword>
<keyword id="KW-0131">Cell cycle</keyword>
<keyword id="KW-0132">Cell division</keyword>
<keyword id="KW-0137">Centromere</keyword>
<keyword id="KW-0158">Chromosome</keyword>
<keyword id="KW-0995">Kinetochore</keyword>
<keyword id="KW-0498">Mitosis</keyword>
<keyword id="KW-0539">Nucleus</keyword>
<keyword id="KW-1185">Reference proteome</keyword>
<reference key="1">
    <citation type="journal article" date="1997" name="Nature">
        <title>The nucleotide sequence of Saccharomyces cerevisiae chromosome XVI.</title>
        <authorList>
            <person name="Bussey H."/>
            <person name="Storms R.K."/>
            <person name="Ahmed A."/>
            <person name="Albermann K."/>
            <person name="Allen E."/>
            <person name="Ansorge W."/>
            <person name="Araujo R."/>
            <person name="Aparicio A."/>
            <person name="Barrell B.G."/>
            <person name="Badcock K."/>
            <person name="Benes V."/>
            <person name="Botstein D."/>
            <person name="Bowman S."/>
            <person name="Brueckner M."/>
            <person name="Carpenter J."/>
            <person name="Cherry J.M."/>
            <person name="Chung E."/>
            <person name="Churcher C.M."/>
            <person name="Coster F."/>
            <person name="Davis K."/>
            <person name="Davis R.W."/>
            <person name="Dietrich F.S."/>
            <person name="Delius H."/>
            <person name="DiPaolo T."/>
            <person name="Dubois E."/>
            <person name="Duesterhoeft A."/>
            <person name="Duncan M."/>
            <person name="Floeth M."/>
            <person name="Fortin N."/>
            <person name="Friesen J.D."/>
            <person name="Fritz C."/>
            <person name="Goffeau A."/>
            <person name="Hall J."/>
            <person name="Hebling U."/>
            <person name="Heumann K."/>
            <person name="Hilbert H."/>
            <person name="Hillier L.W."/>
            <person name="Hunicke-Smith S."/>
            <person name="Hyman R.W."/>
            <person name="Johnston M."/>
            <person name="Kalman S."/>
            <person name="Kleine K."/>
            <person name="Komp C."/>
            <person name="Kurdi O."/>
            <person name="Lashkari D."/>
            <person name="Lew H."/>
            <person name="Lin A."/>
            <person name="Lin D."/>
            <person name="Louis E.J."/>
            <person name="Marathe R."/>
            <person name="Messenguy F."/>
            <person name="Mewes H.-W."/>
            <person name="Mirtipati S."/>
            <person name="Moestl D."/>
            <person name="Mueller-Auer S."/>
            <person name="Namath A."/>
            <person name="Nentwich U."/>
            <person name="Oefner P."/>
            <person name="Pearson D."/>
            <person name="Petel F.X."/>
            <person name="Pohl T.M."/>
            <person name="Purnelle B."/>
            <person name="Rajandream M.A."/>
            <person name="Rechmann S."/>
            <person name="Rieger M."/>
            <person name="Riles L."/>
            <person name="Roberts D."/>
            <person name="Schaefer M."/>
            <person name="Scharfe M."/>
            <person name="Scherens B."/>
            <person name="Schramm S."/>
            <person name="Schroeder M."/>
            <person name="Sdicu A.-M."/>
            <person name="Tettelin H."/>
            <person name="Urrestarazu L.A."/>
            <person name="Ushinsky S."/>
            <person name="Vierendeels F."/>
            <person name="Vissers S."/>
            <person name="Voss H."/>
            <person name="Walsh S.V."/>
            <person name="Wambutt R."/>
            <person name="Wang Y."/>
            <person name="Wedler E."/>
            <person name="Wedler H."/>
            <person name="Winnett E."/>
            <person name="Zhong W.-W."/>
            <person name="Zollner A."/>
            <person name="Vo D.H."/>
            <person name="Hani J."/>
        </authorList>
    </citation>
    <scope>NUCLEOTIDE SEQUENCE [LARGE SCALE GENOMIC DNA]</scope>
    <source>
        <strain>ATCC 204508 / S288c</strain>
    </source>
</reference>
<reference key="2">
    <citation type="journal article" date="2014" name="G3 (Bethesda)">
        <title>The reference genome sequence of Saccharomyces cerevisiae: Then and now.</title>
        <authorList>
            <person name="Engel S.R."/>
            <person name="Dietrich F.S."/>
            <person name="Fisk D.G."/>
            <person name="Binkley G."/>
            <person name="Balakrishnan R."/>
            <person name="Costanzo M.C."/>
            <person name="Dwight S.S."/>
            <person name="Hitz B.C."/>
            <person name="Karra K."/>
            <person name="Nash R.S."/>
            <person name="Weng S."/>
            <person name="Wong E.D."/>
            <person name="Lloyd P."/>
            <person name="Skrzypek M.S."/>
            <person name="Miyasato S.R."/>
            <person name="Simison M."/>
            <person name="Cherry J.M."/>
        </authorList>
    </citation>
    <scope>GENOME REANNOTATION</scope>
    <source>
        <strain>ATCC 204508 / S288c</strain>
    </source>
</reference>
<reference key="3">
    <citation type="journal article" date="2007" name="Genome Res.">
        <title>Approaching a complete repository of sequence-verified protein-encoding clones for Saccharomyces cerevisiae.</title>
        <authorList>
            <person name="Hu Y."/>
            <person name="Rolfs A."/>
            <person name="Bhullar B."/>
            <person name="Murthy T.V.S."/>
            <person name="Zhu C."/>
            <person name="Berger M.F."/>
            <person name="Camargo A.A."/>
            <person name="Kelley F."/>
            <person name="McCarron S."/>
            <person name="Jepson D."/>
            <person name="Richardson A."/>
            <person name="Raphael J."/>
            <person name="Moreira D."/>
            <person name="Taycher E."/>
            <person name="Zuo D."/>
            <person name="Mohr S."/>
            <person name="Kane M.F."/>
            <person name="Williamson J."/>
            <person name="Simpson A.J.G."/>
            <person name="Bulyk M.L."/>
            <person name="Harlow E."/>
            <person name="Marsischky G."/>
            <person name="Kolodner R.D."/>
            <person name="LaBaer J."/>
        </authorList>
    </citation>
    <scope>NUCLEOTIDE SEQUENCE [GENOMIC DNA]</scope>
    <source>
        <strain>ATCC 204508 / S288c</strain>
    </source>
</reference>
<reference key="4">
    <citation type="journal article" date="2002" name="Eukaryot. Cell">
        <title>Nnf1p, Dsn1p, Mtw1p, and Nsl1p: a new group of proteins important for chromosome segregation in Saccharomyces cerevisiae.</title>
        <authorList>
            <person name="Euskirchen G.M."/>
        </authorList>
    </citation>
    <scope>FUNCTION</scope>
    <scope>SUBCELLULAR LOCATION</scope>
</reference>
<reference key="5">
    <citation type="journal article" date="2003" name="Dev. Cell">
        <title>An Mtw1 complex promotes kinetochore biorientation that is monitored by the Ipl1/Aurora protein kinase.</title>
        <authorList>
            <person name="Pinsky B.A."/>
            <person name="Tatsutani S.Y."/>
            <person name="Collins K.A."/>
            <person name="Biggins S."/>
        </authorList>
    </citation>
    <scope>IDENTIFICATION IN THE MIND COMPLEX</scope>
</reference>
<reference key="6">
    <citation type="journal article" date="2003" name="EMBO J.">
        <title>Nsl1p is essential for the establishment of bipolarity and the localization of the Dam-Duo complex.</title>
        <authorList>
            <person name="Scharfenberger M."/>
            <person name="Ortiz J."/>
            <person name="Grau N."/>
            <person name="Janke C."/>
            <person name="Schiebel E."/>
            <person name="Lechner J."/>
        </authorList>
    </citation>
    <scope>FUNCTION</scope>
    <scope>IDENTIFICATION IN THE MIND COMPLEX</scope>
    <scope>SUBCELLULAR LOCATION</scope>
</reference>
<reference key="7">
    <citation type="journal article" date="2003" name="Genes Dev.">
        <title>Hierarchical assembly of the budding yeast kinetochore from multiple subcomplexes.</title>
        <authorList>
            <person name="De Wulf P."/>
            <person name="McAinsh A.D."/>
            <person name="Sorger P.K."/>
        </authorList>
    </citation>
    <scope>IDENTIFICATION IN THE MIND COMPLEX</scope>
    <scope>FUNCTION OF THE MIND COMPLEX</scope>
</reference>
<reference key="8">
    <citation type="journal article" date="2003" name="Mol. Cell">
        <title>Assigning function to yeast proteins by integration of technologies.</title>
        <authorList>
            <person name="Hazbun T.R."/>
            <person name="Malmstroem L."/>
            <person name="Anderson S."/>
            <person name="Graczyk B.J."/>
            <person name="Fox B."/>
            <person name="Riffle M."/>
            <person name="Sundin B.A."/>
            <person name="Aranda J.D."/>
            <person name="McDonald W.H."/>
            <person name="Chiu C.-H."/>
            <person name="Snydsman B.E."/>
            <person name="Bradley P."/>
            <person name="Muller E.G.D."/>
            <person name="Fields S."/>
            <person name="Baker D."/>
            <person name="Yates J.R. III"/>
            <person name="Davis T.N."/>
        </authorList>
    </citation>
    <scope>IDENTIFICATION BY MASS SPECTROMETRY</scope>
    <scope>INTERACTION WITH DSN1</scope>
</reference>
<reference key="9">
    <citation type="journal article" date="2003" name="Nature">
        <title>Global analysis of protein expression in yeast.</title>
        <authorList>
            <person name="Ghaemmaghami S."/>
            <person name="Huh W.-K."/>
            <person name="Bower K."/>
            <person name="Howson R.W."/>
            <person name="Belle A."/>
            <person name="Dephoure N."/>
            <person name="O'Shea E.K."/>
            <person name="Weissman J.S."/>
        </authorList>
    </citation>
    <scope>LEVEL OF PROTEIN EXPRESSION [LARGE SCALE ANALYSIS]</scope>
</reference>
<reference key="10">
    <citation type="journal article" date="2012" name="Proc. Natl. Acad. Sci. U.S.A.">
        <title>N-terminal acetylome analyses and functional insights of the N-terminal acetyltransferase NatB.</title>
        <authorList>
            <person name="Van Damme P."/>
            <person name="Lasa M."/>
            <person name="Polevoda B."/>
            <person name="Gazquez C."/>
            <person name="Elosegui-Artola A."/>
            <person name="Kim D.S."/>
            <person name="De Juan-Pardo E."/>
            <person name="Demeyer K."/>
            <person name="Hole K."/>
            <person name="Larrea E."/>
            <person name="Timmerman E."/>
            <person name="Prieto J."/>
            <person name="Arnesen T."/>
            <person name="Sherman F."/>
            <person name="Gevaert K."/>
            <person name="Aldabe R."/>
        </authorList>
    </citation>
    <scope>ACETYLATION [LARGE SCALE ANALYSIS] AT SER-2</scope>
    <scope>CLEAVAGE OF INITIATOR METHIONINE [LARGE SCALE ANALYSIS]</scope>
    <scope>IDENTIFICATION BY MASS SPECTROMETRY [LARGE SCALE ANALYSIS]</scope>
</reference>
<evidence type="ECO:0000269" key="1">
    <source>
    </source>
</evidence>
<evidence type="ECO:0000269" key="2">
    <source>
    </source>
</evidence>
<evidence type="ECO:0000269" key="3">
    <source>
    </source>
</evidence>
<evidence type="ECO:0000269" key="4">
    <source>
    </source>
</evidence>
<evidence type="ECO:0000269" key="5">
    <source>
    </source>
</evidence>
<evidence type="ECO:0000269" key="6">
    <source>
    </source>
</evidence>
<evidence type="ECO:0000305" key="7"/>
<evidence type="ECO:0007744" key="8">
    <source>
    </source>
</evidence>